<name>PUR8_HELPJ</name>
<keyword id="KW-0456">Lyase</keyword>
<keyword id="KW-0658">Purine biosynthesis</keyword>
<feature type="chain" id="PRO_0000137882" description="Adenylosuccinate lyase">
    <location>
        <begin position="1"/>
        <end position="440"/>
    </location>
</feature>
<feature type="active site" description="Proton donor/acceptor" evidence="2">
    <location>
        <position position="141"/>
    </location>
</feature>
<feature type="active site" description="Proton donor/acceptor" evidence="2">
    <location>
        <position position="262"/>
    </location>
</feature>
<feature type="binding site" evidence="2">
    <location>
        <begin position="4"/>
        <end position="5"/>
    </location>
    <ligand>
        <name>N(6)-(1,2-dicarboxyethyl)-AMP</name>
        <dbReference type="ChEBI" id="CHEBI:57567"/>
    </ligand>
</feature>
<feature type="binding site" evidence="2">
    <location>
        <begin position="67"/>
        <end position="69"/>
    </location>
    <ligand>
        <name>N(6)-(1,2-dicarboxyethyl)-AMP</name>
        <dbReference type="ChEBI" id="CHEBI:57567"/>
    </ligand>
</feature>
<feature type="binding site" evidence="2">
    <location>
        <begin position="93"/>
        <end position="94"/>
    </location>
    <ligand>
        <name>N(6)-(1,2-dicarboxyethyl)-AMP</name>
        <dbReference type="ChEBI" id="CHEBI:57567"/>
    </ligand>
</feature>
<feature type="binding site" evidence="2">
    <location>
        <position position="212"/>
    </location>
    <ligand>
        <name>N(6)-(1,2-dicarboxyethyl)-AMP</name>
        <dbReference type="ChEBI" id="CHEBI:57567"/>
    </ligand>
</feature>
<feature type="binding site" evidence="2">
    <location>
        <position position="263"/>
    </location>
    <ligand>
        <name>N(6)-(1,2-dicarboxyethyl)-AMP</name>
        <dbReference type="ChEBI" id="CHEBI:57567"/>
    </ligand>
</feature>
<feature type="binding site" evidence="2">
    <location>
        <begin position="268"/>
        <end position="270"/>
    </location>
    <ligand>
        <name>N(6)-(1,2-dicarboxyethyl)-AMP</name>
        <dbReference type="ChEBI" id="CHEBI:57567"/>
    </ligand>
</feature>
<feature type="binding site" evidence="2">
    <location>
        <position position="276"/>
    </location>
    <ligand>
        <name>N(6)-(1,2-dicarboxyethyl)-AMP</name>
        <dbReference type="ChEBI" id="CHEBI:57567"/>
    </ligand>
</feature>
<feature type="binding site" evidence="2">
    <location>
        <begin position="307"/>
        <end position="311"/>
    </location>
    <ligand>
        <name>N(6)-(1,2-dicarboxyethyl)-AMP</name>
        <dbReference type="ChEBI" id="CHEBI:57567"/>
    </ligand>
</feature>
<comment type="function">
    <text evidence="2">Catalyzes two reactions in de novo purine nucleotide biosynthesis. Catalyzes the breakdown of 5-aminoimidazole- (N-succinylocarboxamide) ribotide (SAICAR or 2-[5-amino-1-(5-phospho-beta-D-ribosyl)imidazole-4-carboxamido]succinate) to 5-aminoimidazole-4-carboxamide ribotide (AICAR or 5-amino-1-(5-phospho-beta-D-ribosyl)imidazole-4-carboxamide) and fumarate, and of adenylosuccinate (ADS or N(6)-(1,2-dicarboxyethyl)-AMP) to adenosine monophosphate (AMP) and fumarate.</text>
</comment>
<comment type="catalytic activity">
    <reaction evidence="2">
        <text>N(6)-(1,2-dicarboxyethyl)-AMP = fumarate + AMP</text>
        <dbReference type="Rhea" id="RHEA:16853"/>
        <dbReference type="ChEBI" id="CHEBI:29806"/>
        <dbReference type="ChEBI" id="CHEBI:57567"/>
        <dbReference type="ChEBI" id="CHEBI:456215"/>
        <dbReference type="EC" id="4.3.2.2"/>
    </reaction>
    <physiologicalReaction direction="left-to-right" evidence="2">
        <dbReference type="Rhea" id="RHEA:16854"/>
    </physiologicalReaction>
</comment>
<comment type="catalytic activity">
    <reaction evidence="2">
        <text>(2S)-2-[5-amino-1-(5-phospho-beta-D-ribosyl)imidazole-4-carboxamido]succinate = 5-amino-1-(5-phospho-beta-D-ribosyl)imidazole-4-carboxamide + fumarate</text>
        <dbReference type="Rhea" id="RHEA:23920"/>
        <dbReference type="ChEBI" id="CHEBI:29806"/>
        <dbReference type="ChEBI" id="CHEBI:58443"/>
        <dbReference type="ChEBI" id="CHEBI:58475"/>
        <dbReference type="EC" id="4.3.2.2"/>
    </reaction>
    <physiologicalReaction direction="left-to-right" evidence="2">
        <dbReference type="Rhea" id="RHEA:23921"/>
    </physiologicalReaction>
</comment>
<comment type="pathway">
    <text>Purine metabolism; AMP biosynthesis via de novo pathway; AMP from IMP: step 2/2.</text>
</comment>
<comment type="pathway">
    <text>Purine metabolism; IMP biosynthesis via de novo pathway; 5-amino-1-(5-phospho-D-ribosyl)imidazole-4-carboxamide from 5-amino-1-(5-phospho-D-ribosyl)imidazole-4-carboxylate: step 2/2.</text>
</comment>
<comment type="subunit">
    <text evidence="1">Homotetramer. Residues from neighboring subunits contribute catalytic and substrate-binding residues to each active site (By similarity).</text>
</comment>
<comment type="similarity">
    <text evidence="3">Belongs to the lyase 1 family. Adenylosuccinate lyase subfamily.</text>
</comment>
<gene>
    <name type="primary">purB</name>
    <name type="ordered locus">jhp_1039</name>
</gene>
<reference key="1">
    <citation type="journal article" date="1999" name="Nature">
        <title>Genomic sequence comparison of two unrelated isolates of the human gastric pathogen Helicobacter pylori.</title>
        <authorList>
            <person name="Alm R.A."/>
            <person name="Ling L.-S.L."/>
            <person name="Moir D.T."/>
            <person name="King B.L."/>
            <person name="Brown E.D."/>
            <person name="Doig P.C."/>
            <person name="Smith D.R."/>
            <person name="Noonan B."/>
            <person name="Guild B.C."/>
            <person name="deJonge B.L."/>
            <person name="Carmel G."/>
            <person name="Tummino P.J."/>
            <person name="Caruso A."/>
            <person name="Uria-Nickelsen M."/>
            <person name="Mills D.M."/>
            <person name="Ives C."/>
            <person name="Gibson R."/>
            <person name="Merberg D."/>
            <person name="Mills S.D."/>
            <person name="Jiang Q."/>
            <person name="Taylor D.E."/>
            <person name="Vovis G.F."/>
            <person name="Trust T.J."/>
        </authorList>
    </citation>
    <scope>NUCLEOTIDE SEQUENCE [LARGE SCALE GENOMIC DNA]</scope>
    <source>
        <strain>J99 / ATCC 700824</strain>
    </source>
</reference>
<organism>
    <name type="scientific">Helicobacter pylori (strain J99 / ATCC 700824)</name>
    <name type="common">Campylobacter pylori J99</name>
    <dbReference type="NCBI Taxonomy" id="85963"/>
    <lineage>
        <taxon>Bacteria</taxon>
        <taxon>Pseudomonadati</taxon>
        <taxon>Campylobacterota</taxon>
        <taxon>Epsilonproteobacteria</taxon>
        <taxon>Campylobacterales</taxon>
        <taxon>Helicobacteraceae</taxon>
        <taxon>Helicobacter</taxon>
    </lineage>
</organism>
<proteinExistence type="inferred from homology"/>
<evidence type="ECO:0000250" key="1"/>
<evidence type="ECO:0000250" key="2">
    <source>
        <dbReference type="UniProtKB" id="P0AB89"/>
    </source>
</evidence>
<evidence type="ECO:0000305" key="3"/>
<protein>
    <recommendedName>
        <fullName>Adenylosuccinate lyase</fullName>
        <shortName>ASL</shortName>
        <ecNumber evidence="2">4.3.2.2</ecNumber>
    </recommendedName>
    <alternativeName>
        <fullName>Adenylosuccinase</fullName>
        <shortName>ASase</shortName>
    </alternativeName>
</protein>
<accession>Q9ZKA2</accession>
<sequence>MLERYANEEMKALWNEQTKFETYLEVEKAVVRAWNKLGQIQDSDCEKICLKAAFNLERIKEIEKTTKHDLIAFTTCVAESLGEESRFFHYGITSSDCIDTAMALLMTKSLKLIQKGVKNLYETLKNRALEHQDTLMVGRSHGVFGEPITFGLVLALFADEIKRHLKALDLTMEFISVGAISGAMGNFAHAPLELEELACGFLGLKTANISNQVIQRDRYARLACDLALLASSCEKIAVNIRHLQRSEVYEVEEAFSAGQKGSSAMPHKRNPILSENITGLCRVIRSFTTPMLENVALWHERDMSHSSVERFALPDLFITSDFMLSRLNSVIENLVVYPKNMLKNLALSGGLVFSQRVLLELPKKGLSREESYSIVQENAMKIWEVLQQGAFKNADENLFLNALLNDERLKKYLNESEIRACFDYSYYTKNVGAIFKRVFG</sequence>
<dbReference type="EC" id="4.3.2.2" evidence="2"/>
<dbReference type="EMBL" id="AE001439">
    <property type="protein sequence ID" value="AAD06609.1"/>
    <property type="molecule type" value="Genomic_DNA"/>
</dbReference>
<dbReference type="PIR" id="B71858">
    <property type="entry name" value="B71858"/>
</dbReference>
<dbReference type="RefSeq" id="WP_000893867.1">
    <property type="nucleotide sequence ID" value="NC_000921.1"/>
</dbReference>
<dbReference type="SMR" id="Q9ZKA2"/>
<dbReference type="KEGG" id="hpj:jhp_1039"/>
<dbReference type="PATRIC" id="fig|85963.30.peg.1550"/>
<dbReference type="eggNOG" id="COG0015">
    <property type="taxonomic scope" value="Bacteria"/>
</dbReference>
<dbReference type="UniPathway" id="UPA00074">
    <property type="reaction ID" value="UER00132"/>
</dbReference>
<dbReference type="UniPathway" id="UPA00075">
    <property type="reaction ID" value="UER00336"/>
</dbReference>
<dbReference type="Proteomes" id="UP000000804">
    <property type="component" value="Chromosome"/>
</dbReference>
<dbReference type="GO" id="GO:0005829">
    <property type="term" value="C:cytosol"/>
    <property type="evidence" value="ECO:0007669"/>
    <property type="project" value="TreeGrafter"/>
</dbReference>
<dbReference type="GO" id="GO:0070626">
    <property type="term" value="F:(S)-2-(5-amino-1-(5-phospho-D-ribosyl)imidazole-4-carboxamido) succinate lyase (fumarate-forming) activity"/>
    <property type="evidence" value="ECO:0007669"/>
    <property type="project" value="TreeGrafter"/>
</dbReference>
<dbReference type="GO" id="GO:0004018">
    <property type="term" value="F:N6-(1,2-dicarboxyethyl)AMP AMP-lyase (fumarate-forming) activity"/>
    <property type="evidence" value="ECO:0007669"/>
    <property type="project" value="InterPro"/>
</dbReference>
<dbReference type="GO" id="GO:0044208">
    <property type="term" value="P:'de novo' AMP biosynthetic process"/>
    <property type="evidence" value="ECO:0007669"/>
    <property type="project" value="UniProtKB-UniPathway"/>
</dbReference>
<dbReference type="GO" id="GO:0006189">
    <property type="term" value="P:'de novo' IMP biosynthetic process"/>
    <property type="evidence" value="ECO:0007669"/>
    <property type="project" value="UniProtKB-UniPathway"/>
</dbReference>
<dbReference type="CDD" id="cd01360">
    <property type="entry name" value="Adenylsuccinate_lyase_1"/>
    <property type="match status" value="1"/>
</dbReference>
<dbReference type="FunFam" id="1.10.40.30:FF:000007">
    <property type="entry name" value="Adenylosuccinate lyase"/>
    <property type="match status" value="1"/>
</dbReference>
<dbReference type="FunFam" id="1.20.200.10:FF:000008">
    <property type="entry name" value="Adenylosuccinate lyase"/>
    <property type="match status" value="1"/>
</dbReference>
<dbReference type="Gene3D" id="1.10.40.30">
    <property type="entry name" value="Fumarase/aspartase (C-terminal domain)"/>
    <property type="match status" value="1"/>
</dbReference>
<dbReference type="Gene3D" id="1.20.200.10">
    <property type="entry name" value="Fumarase/aspartase (Central domain)"/>
    <property type="match status" value="1"/>
</dbReference>
<dbReference type="Gene3D" id="1.10.275.10">
    <property type="entry name" value="Fumarase/aspartase (N-terminal domain)"/>
    <property type="match status" value="1"/>
</dbReference>
<dbReference type="InterPro" id="IPR019468">
    <property type="entry name" value="AdenyloSucc_lyase_C"/>
</dbReference>
<dbReference type="InterPro" id="IPR024083">
    <property type="entry name" value="Fumarase/histidase_N"/>
</dbReference>
<dbReference type="InterPro" id="IPR020557">
    <property type="entry name" value="Fumarate_lyase_CS"/>
</dbReference>
<dbReference type="InterPro" id="IPR000362">
    <property type="entry name" value="Fumarate_lyase_fam"/>
</dbReference>
<dbReference type="InterPro" id="IPR022761">
    <property type="entry name" value="Fumarate_lyase_N"/>
</dbReference>
<dbReference type="InterPro" id="IPR008948">
    <property type="entry name" value="L-Aspartase-like"/>
</dbReference>
<dbReference type="InterPro" id="IPR004769">
    <property type="entry name" value="Pur_lyase"/>
</dbReference>
<dbReference type="NCBIfam" id="TIGR00928">
    <property type="entry name" value="purB"/>
    <property type="match status" value="1"/>
</dbReference>
<dbReference type="PANTHER" id="PTHR43172">
    <property type="entry name" value="ADENYLOSUCCINATE LYASE"/>
    <property type="match status" value="1"/>
</dbReference>
<dbReference type="PANTHER" id="PTHR43172:SF1">
    <property type="entry name" value="ADENYLOSUCCINATE LYASE"/>
    <property type="match status" value="1"/>
</dbReference>
<dbReference type="Pfam" id="PF10397">
    <property type="entry name" value="ADSL_C"/>
    <property type="match status" value="1"/>
</dbReference>
<dbReference type="Pfam" id="PF00206">
    <property type="entry name" value="Lyase_1"/>
    <property type="match status" value="1"/>
</dbReference>
<dbReference type="PRINTS" id="PR00149">
    <property type="entry name" value="FUMRATELYASE"/>
</dbReference>
<dbReference type="SMART" id="SM00998">
    <property type="entry name" value="ADSL_C"/>
    <property type="match status" value="1"/>
</dbReference>
<dbReference type="SUPFAM" id="SSF48557">
    <property type="entry name" value="L-aspartase-like"/>
    <property type="match status" value="1"/>
</dbReference>
<dbReference type="PROSITE" id="PS00163">
    <property type="entry name" value="FUMARATE_LYASES"/>
    <property type="match status" value="1"/>
</dbReference>